<protein>
    <recommendedName>
        <fullName evidence="1">UPF0154 protein BcerKBAB4_3367</fullName>
    </recommendedName>
</protein>
<name>Y3367_BACMK</name>
<evidence type="ECO:0000255" key="1">
    <source>
        <dbReference type="HAMAP-Rule" id="MF_00363"/>
    </source>
</evidence>
<proteinExistence type="inferred from homology"/>
<sequence>MPMWLGILVGVVALVAGVALGFFIARKYMMNYLQKNPPINEQMLKMMMMQMGQKPSQKKINQMMSAMNKQQTK</sequence>
<dbReference type="EMBL" id="CP000903">
    <property type="protein sequence ID" value="ABY44541.1"/>
    <property type="molecule type" value="Genomic_DNA"/>
</dbReference>
<dbReference type="RefSeq" id="WP_001132292.1">
    <property type="nucleotide sequence ID" value="NZ_CAKMRX030000188.1"/>
</dbReference>
<dbReference type="SMR" id="A9VPW5"/>
<dbReference type="KEGG" id="bwe:BcerKBAB4_3367"/>
<dbReference type="eggNOG" id="COG3763">
    <property type="taxonomic scope" value="Bacteria"/>
</dbReference>
<dbReference type="HOGENOM" id="CLU_180108_0_1_9"/>
<dbReference type="Proteomes" id="UP000002154">
    <property type="component" value="Chromosome"/>
</dbReference>
<dbReference type="GO" id="GO:0005886">
    <property type="term" value="C:plasma membrane"/>
    <property type="evidence" value="ECO:0007669"/>
    <property type="project" value="UniProtKB-SubCell"/>
</dbReference>
<dbReference type="HAMAP" id="MF_00363">
    <property type="entry name" value="UPF0154"/>
    <property type="match status" value="1"/>
</dbReference>
<dbReference type="InterPro" id="IPR005359">
    <property type="entry name" value="UPF0154"/>
</dbReference>
<dbReference type="NCBIfam" id="NF002503">
    <property type="entry name" value="PRK01844.1"/>
    <property type="match status" value="1"/>
</dbReference>
<dbReference type="Pfam" id="PF03672">
    <property type="entry name" value="UPF0154"/>
    <property type="match status" value="1"/>
</dbReference>
<organism>
    <name type="scientific">Bacillus mycoides (strain KBAB4)</name>
    <name type="common">Bacillus weihenstephanensis</name>
    <dbReference type="NCBI Taxonomy" id="315730"/>
    <lineage>
        <taxon>Bacteria</taxon>
        <taxon>Bacillati</taxon>
        <taxon>Bacillota</taxon>
        <taxon>Bacilli</taxon>
        <taxon>Bacillales</taxon>
        <taxon>Bacillaceae</taxon>
        <taxon>Bacillus</taxon>
        <taxon>Bacillus cereus group</taxon>
    </lineage>
</organism>
<reference key="1">
    <citation type="journal article" date="2008" name="Chem. Biol. Interact.">
        <title>Extending the Bacillus cereus group genomics to putative food-borne pathogens of different toxicity.</title>
        <authorList>
            <person name="Lapidus A."/>
            <person name="Goltsman E."/>
            <person name="Auger S."/>
            <person name="Galleron N."/>
            <person name="Segurens B."/>
            <person name="Dossat C."/>
            <person name="Land M.L."/>
            <person name="Broussolle V."/>
            <person name="Brillard J."/>
            <person name="Guinebretiere M.-H."/>
            <person name="Sanchis V."/>
            <person name="Nguen-the C."/>
            <person name="Lereclus D."/>
            <person name="Richardson P."/>
            <person name="Wincker P."/>
            <person name="Weissenbach J."/>
            <person name="Ehrlich S.D."/>
            <person name="Sorokin A."/>
        </authorList>
    </citation>
    <scope>NUCLEOTIDE SEQUENCE [LARGE SCALE GENOMIC DNA]</scope>
    <source>
        <strain>KBAB4</strain>
    </source>
</reference>
<keyword id="KW-1003">Cell membrane</keyword>
<keyword id="KW-0472">Membrane</keyword>
<keyword id="KW-0812">Transmembrane</keyword>
<keyword id="KW-1133">Transmembrane helix</keyword>
<feature type="chain" id="PRO_1000121044" description="UPF0154 protein BcerKBAB4_3367">
    <location>
        <begin position="1"/>
        <end position="73"/>
    </location>
</feature>
<feature type="transmembrane region" description="Helical" evidence="1">
    <location>
        <begin position="4"/>
        <end position="24"/>
    </location>
</feature>
<comment type="subcellular location">
    <subcellularLocation>
        <location evidence="1">Cell membrane</location>
        <topology evidence="1">Single-pass membrane protein</topology>
    </subcellularLocation>
</comment>
<comment type="similarity">
    <text evidence="1">Belongs to the UPF0154 family.</text>
</comment>
<accession>A9VPW5</accession>
<gene>
    <name type="ordered locus">BcerKBAB4_3367</name>
</gene>